<keyword id="KW-0378">Hydrolase</keyword>
<keyword id="KW-0460">Magnesium</keyword>
<keyword id="KW-0479">Metal-binding</keyword>
<keyword id="KW-0546">Nucleotide metabolism</keyword>
<keyword id="KW-1185">Reference proteome</keyword>
<accession>Q5LWD3</accession>
<organism>
    <name type="scientific">Ruegeria pomeroyi (strain ATCC 700808 / DSM 15171 / DSS-3)</name>
    <name type="common">Silicibacter pomeroyi</name>
    <dbReference type="NCBI Taxonomy" id="246200"/>
    <lineage>
        <taxon>Bacteria</taxon>
        <taxon>Pseudomonadati</taxon>
        <taxon>Pseudomonadota</taxon>
        <taxon>Alphaproteobacteria</taxon>
        <taxon>Rhodobacterales</taxon>
        <taxon>Roseobacteraceae</taxon>
        <taxon>Ruegeria</taxon>
    </lineage>
</organism>
<gene>
    <name evidence="1" type="primary">dut</name>
    <name type="ordered locus">SPO0409</name>
</gene>
<evidence type="ECO:0000255" key="1">
    <source>
        <dbReference type="HAMAP-Rule" id="MF_00116"/>
    </source>
</evidence>
<name>DUT_RUEPO</name>
<protein>
    <recommendedName>
        <fullName evidence="1">Deoxyuridine 5'-triphosphate nucleotidohydrolase</fullName>
        <shortName evidence="1">dUTPase</shortName>
        <ecNumber evidence="1">3.6.1.23</ecNumber>
    </recommendedName>
    <alternativeName>
        <fullName evidence="1">dUTP pyrophosphatase</fullName>
    </alternativeName>
</protein>
<comment type="function">
    <text evidence="1">This enzyme is involved in nucleotide metabolism: it produces dUMP, the immediate precursor of thymidine nucleotides and it decreases the intracellular concentration of dUTP so that uracil cannot be incorporated into DNA.</text>
</comment>
<comment type="catalytic activity">
    <reaction evidence="1">
        <text>dUTP + H2O = dUMP + diphosphate + H(+)</text>
        <dbReference type="Rhea" id="RHEA:10248"/>
        <dbReference type="ChEBI" id="CHEBI:15377"/>
        <dbReference type="ChEBI" id="CHEBI:15378"/>
        <dbReference type="ChEBI" id="CHEBI:33019"/>
        <dbReference type="ChEBI" id="CHEBI:61555"/>
        <dbReference type="ChEBI" id="CHEBI:246422"/>
        <dbReference type="EC" id="3.6.1.23"/>
    </reaction>
</comment>
<comment type="cofactor">
    <cofactor evidence="1">
        <name>Mg(2+)</name>
        <dbReference type="ChEBI" id="CHEBI:18420"/>
    </cofactor>
</comment>
<comment type="pathway">
    <text evidence="1">Pyrimidine metabolism; dUMP biosynthesis; dUMP from dCTP (dUTP route): step 2/2.</text>
</comment>
<comment type="similarity">
    <text evidence="1">Belongs to the dUTPase family.</text>
</comment>
<dbReference type="EC" id="3.6.1.23" evidence="1"/>
<dbReference type="EMBL" id="CP000031">
    <property type="protein sequence ID" value="AAV93727.1"/>
    <property type="molecule type" value="Genomic_DNA"/>
</dbReference>
<dbReference type="RefSeq" id="WP_011046170.1">
    <property type="nucleotide sequence ID" value="NC_003911.12"/>
</dbReference>
<dbReference type="SMR" id="Q5LWD3"/>
<dbReference type="STRING" id="246200.SPO0409"/>
<dbReference type="PaxDb" id="246200-SPO0409"/>
<dbReference type="KEGG" id="sil:SPO0409"/>
<dbReference type="eggNOG" id="COG0756">
    <property type="taxonomic scope" value="Bacteria"/>
</dbReference>
<dbReference type="HOGENOM" id="CLU_068508_1_2_5"/>
<dbReference type="OrthoDB" id="9809956at2"/>
<dbReference type="UniPathway" id="UPA00610">
    <property type="reaction ID" value="UER00666"/>
</dbReference>
<dbReference type="Proteomes" id="UP000001023">
    <property type="component" value="Chromosome"/>
</dbReference>
<dbReference type="GO" id="GO:0004170">
    <property type="term" value="F:dUTP diphosphatase activity"/>
    <property type="evidence" value="ECO:0007669"/>
    <property type="project" value="UniProtKB-UniRule"/>
</dbReference>
<dbReference type="GO" id="GO:0000287">
    <property type="term" value="F:magnesium ion binding"/>
    <property type="evidence" value="ECO:0007669"/>
    <property type="project" value="UniProtKB-UniRule"/>
</dbReference>
<dbReference type="GO" id="GO:0006226">
    <property type="term" value="P:dUMP biosynthetic process"/>
    <property type="evidence" value="ECO:0007669"/>
    <property type="project" value="UniProtKB-UniRule"/>
</dbReference>
<dbReference type="GO" id="GO:0046081">
    <property type="term" value="P:dUTP catabolic process"/>
    <property type="evidence" value="ECO:0007669"/>
    <property type="project" value="InterPro"/>
</dbReference>
<dbReference type="CDD" id="cd07557">
    <property type="entry name" value="trimeric_dUTPase"/>
    <property type="match status" value="1"/>
</dbReference>
<dbReference type="FunFam" id="2.70.40.10:FF:000002">
    <property type="entry name" value="dUTP diphosphatase"/>
    <property type="match status" value="1"/>
</dbReference>
<dbReference type="Gene3D" id="2.70.40.10">
    <property type="match status" value="1"/>
</dbReference>
<dbReference type="HAMAP" id="MF_00116">
    <property type="entry name" value="dUTPase_bact"/>
    <property type="match status" value="1"/>
</dbReference>
<dbReference type="InterPro" id="IPR008181">
    <property type="entry name" value="dUTPase"/>
</dbReference>
<dbReference type="InterPro" id="IPR029054">
    <property type="entry name" value="dUTPase-like"/>
</dbReference>
<dbReference type="InterPro" id="IPR036157">
    <property type="entry name" value="dUTPase-like_sf"/>
</dbReference>
<dbReference type="InterPro" id="IPR033704">
    <property type="entry name" value="dUTPase_trimeric"/>
</dbReference>
<dbReference type="NCBIfam" id="TIGR00576">
    <property type="entry name" value="dut"/>
    <property type="match status" value="1"/>
</dbReference>
<dbReference type="NCBIfam" id="NF001862">
    <property type="entry name" value="PRK00601.1"/>
    <property type="match status" value="1"/>
</dbReference>
<dbReference type="PANTHER" id="PTHR11241">
    <property type="entry name" value="DEOXYURIDINE 5'-TRIPHOSPHATE NUCLEOTIDOHYDROLASE"/>
    <property type="match status" value="1"/>
</dbReference>
<dbReference type="PANTHER" id="PTHR11241:SF0">
    <property type="entry name" value="DEOXYURIDINE 5'-TRIPHOSPHATE NUCLEOTIDOHYDROLASE"/>
    <property type="match status" value="1"/>
</dbReference>
<dbReference type="Pfam" id="PF00692">
    <property type="entry name" value="dUTPase"/>
    <property type="match status" value="1"/>
</dbReference>
<dbReference type="SUPFAM" id="SSF51283">
    <property type="entry name" value="dUTPase-like"/>
    <property type="match status" value="1"/>
</dbReference>
<reference key="1">
    <citation type="journal article" date="2004" name="Nature">
        <title>Genome sequence of Silicibacter pomeroyi reveals adaptations to the marine environment.</title>
        <authorList>
            <person name="Moran M.A."/>
            <person name="Buchan A."/>
            <person name="Gonzalez J.M."/>
            <person name="Heidelberg J.F."/>
            <person name="Whitman W.B."/>
            <person name="Kiene R.P."/>
            <person name="Henriksen J.R."/>
            <person name="King G.M."/>
            <person name="Belas R."/>
            <person name="Fuqua C."/>
            <person name="Brinkac L.M."/>
            <person name="Lewis M."/>
            <person name="Johri S."/>
            <person name="Weaver B."/>
            <person name="Pai G."/>
            <person name="Eisen J.A."/>
            <person name="Rahe E."/>
            <person name="Sheldon W.M."/>
            <person name="Ye W."/>
            <person name="Miller T.R."/>
            <person name="Carlton J."/>
            <person name="Rasko D.A."/>
            <person name="Paulsen I.T."/>
            <person name="Ren Q."/>
            <person name="Daugherty S.C."/>
            <person name="DeBoy R.T."/>
            <person name="Dodson R.J."/>
            <person name="Durkin A.S."/>
            <person name="Madupu R."/>
            <person name="Nelson W.C."/>
            <person name="Sullivan S.A."/>
            <person name="Rosovitz M.J."/>
            <person name="Haft D.H."/>
            <person name="Selengut J."/>
            <person name="Ward N."/>
        </authorList>
    </citation>
    <scope>NUCLEOTIDE SEQUENCE [LARGE SCALE GENOMIC DNA]</scope>
    <source>
        <strain>ATCC 700808 / DSM 15171 / DSS-3</strain>
    </source>
</reference>
<reference key="2">
    <citation type="journal article" date="2014" name="Stand. Genomic Sci.">
        <title>An updated genome annotation for the model marine bacterium Ruegeria pomeroyi DSS-3.</title>
        <authorList>
            <person name="Rivers A.R."/>
            <person name="Smith C.B."/>
            <person name="Moran M.A."/>
        </authorList>
    </citation>
    <scope>GENOME REANNOTATION</scope>
    <source>
        <strain>ATCC 700808 / DSM 15171 / DSS-3</strain>
    </source>
</reference>
<sequence length="151" mass="15630">MVAIRVIRDAGADTQVPLPSYETTGAAGADIRANLPDRGSLTLAPGGRALIPTGLRVEIPAGYEIQIRPRSGLALKHGITLPNTPGTIDSDYRGPLGVILLNAGAEPFEVVHGERIAQLVVAPVVQARFELTEALGETERGAGGFGSTGRG</sequence>
<proteinExistence type="inferred from homology"/>
<feature type="chain" id="PRO_0000231431" description="Deoxyuridine 5'-triphosphate nucleotidohydrolase">
    <location>
        <begin position="1"/>
        <end position="151"/>
    </location>
</feature>
<feature type="binding site" evidence="1">
    <location>
        <begin position="70"/>
        <end position="72"/>
    </location>
    <ligand>
        <name>substrate</name>
    </ligand>
</feature>
<feature type="binding site" evidence="1">
    <location>
        <position position="83"/>
    </location>
    <ligand>
        <name>substrate</name>
    </ligand>
</feature>
<feature type="binding site" evidence="1">
    <location>
        <begin position="87"/>
        <end position="89"/>
    </location>
    <ligand>
        <name>substrate</name>
    </ligand>
</feature>